<accession>Q6LV97</accession>
<protein>
    <recommendedName>
        <fullName evidence="1">Large ribosomal subunit protein uL15</fullName>
    </recommendedName>
    <alternativeName>
        <fullName evidence="3">50S ribosomal protein L15</fullName>
    </alternativeName>
</protein>
<name>RL15_PHOPR</name>
<gene>
    <name evidence="1" type="primary">rplO</name>
    <name type="ordered locus">PBPRA0339</name>
</gene>
<comment type="function">
    <text evidence="1">Binds to the 23S rRNA.</text>
</comment>
<comment type="subunit">
    <text evidence="1">Part of the 50S ribosomal subunit.</text>
</comment>
<comment type="similarity">
    <text evidence="1">Belongs to the universal ribosomal protein uL15 family.</text>
</comment>
<keyword id="KW-1185">Reference proteome</keyword>
<keyword id="KW-0687">Ribonucleoprotein</keyword>
<keyword id="KW-0689">Ribosomal protein</keyword>
<keyword id="KW-0694">RNA-binding</keyword>
<keyword id="KW-0699">rRNA-binding</keyword>
<sequence length="144" mass="15009">MRLNTLSPAPGSKPSAKRVGRGIGSGLGKTCGRGHKGQKSRSGGSVRPGFEGGQMPLKQRLPKFGFTSRKSLVTAEVRLGELAKVEGDVIDLATLKTANLITKDIKFVKVVLSGEIARTVTVNGLRVTKGAKAAIEAAGGKIEE</sequence>
<dbReference type="EMBL" id="CR378663">
    <property type="protein sequence ID" value="CAG18778.1"/>
    <property type="molecule type" value="Genomic_DNA"/>
</dbReference>
<dbReference type="RefSeq" id="WP_011217143.1">
    <property type="nucleotide sequence ID" value="NC_006370.1"/>
</dbReference>
<dbReference type="SMR" id="Q6LV97"/>
<dbReference type="STRING" id="298386.PBPRA0339"/>
<dbReference type="KEGG" id="ppr:PBPRA0339"/>
<dbReference type="eggNOG" id="COG0200">
    <property type="taxonomic scope" value="Bacteria"/>
</dbReference>
<dbReference type="HOGENOM" id="CLU_055188_4_2_6"/>
<dbReference type="Proteomes" id="UP000000593">
    <property type="component" value="Chromosome 1"/>
</dbReference>
<dbReference type="GO" id="GO:0022625">
    <property type="term" value="C:cytosolic large ribosomal subunit"/>
    <property type="evidence" value="ECO:0007669"/>
    <property type="project" value="TreeGrafter"/>
</dbReference>
<dbReference type="GO" id="GO:0019843">
    <property type="term" value="F:rRNA binding"/>
    <property type="evidence" value="ECO:0007669"/>
    <property type="project" value="UniProtKB-UniRule"/>
</dbReference>
<dbReference type="GO" id="GO:0003735">
    <property type="term" value="F:structural constituent of ribosome"/>
    <property type="evidence" value="ECO:0007669"/>
    <property type="project" value="InterPro"/>
</dbReference>
<dbReference type="GO" id="GO:0006412">
    <property type="term" value="P:translation"/>
    <property type="evidence" value="ECO:0007669"/>
    <property type="project" value="UniProtKB-UniRule"/>
</dbReference>
<dbReference type="Gene3D" id="3.100.10.10">
    <property type="match status" value="1"/>
</dbReference>
<dbReference type="HAMAP" id="MF_01341">
    <property type="entry name" value="Ribosomal_uL15"/>
    <property type="match status" value="1"/>
</dbReference>
<dbReference type="InterPro" id="IPR030878">
    <property type="entry name" value="Ribosomal_uL15"/>
</dbReference>
<dbReference type="InterPro" id="IPR021131">
    <property type="entry name" value="Ribosomal_uL15/eL18"/>
</dbReference>
<dbReference type="InterPro" id="IPR036227">
    <property type="entry name" value="Ribosomal_uL15/eL18_sf"/>
</dbReference>
<dbReference type="InterPro" id="IPR005749">
    <property type="entry name" value="Ribosomal_uL15_bac-type"/>
</dbReference>
<dbReference type="InterPro" id="IPR001196">
    <property type="entry name" value="Ribosomal_uL15_CS"/>
</dbReference>
<dbReference type="NCBIfam" id="TIGR01071">
    <property type="entry name" value="rplO_bact"/>
    <property type="match status" value="1"/>
</dbReference>
<dbReference type="PANTHER" id="PTHR12934">
    <property type="entry name" value="50S RIBOSOMAL PROTEIN L15"/>
    <property type="match status" value="1"/>
</dbReference>
<dbReference type="PANTHER" id="PTHR12934:SF11">
    <property type="entry name" value="LARGE RIBOSOMAL SUBUNIT PROTEIN UL15M"/>
    <property type="match status" value="1"/>
</dbReference>
<dbReference type="Pfam" id="PF00828">
    <property type="entry name" value="Ribosomal_L27A"/>
    <property type="match status" value="1"/>
</dbReference>
<dbReference type="SUPFAM" id="SSF52080">
    <property type="entry name" value="Ribosomal proteins L15p and L18e"/>
    <property type="match status" value="1"/>
</dbReference>
<dbReference type="PROSITE" id="PS00475">
    <property type="entry name" value="RIBOSOMAL_L15"/>
    <property type="match status" value="1"/>
</dbReference>
<reference key="1">
    <citation type="journal article" date="2005" name="Science">
        <title>Life at depth: Photobacterium profundum genome sequence and expression analysis.</title>
        <authorList>
            <person name="Vezzi A."/>
            <person name="Campanaro S."/>
            <person name="D'Angelo M."/>
            <person name="Simonato F."/>
            <person name="Vitulo N."/>
            <person name="Lauro F.M."/>
            <person name="Cestaro A."/>
            <person name="Malacrida G."/>
            <person name="Simionati B."/>
            <person name="Cannata N."/>
            <person name="Romualdi C."/>
            <person name="Bartlett D.H."/>
            <person name="Valle G."/>
        </authorList>
    </citation>
    <scope>NUCLEOTIDE SEQUENCE [LARGE SCALE GENOMIC DNA]</scope>
    <source>
        <strain>ATCC BAA-1253 / SS9</strain>
    </source>
</reference>
<proteinExistence type="inferred from homology"/>
<organism>
    <name type="scientific">Photobacterium profundum (strain SS9)</name>
    <dbReference type="NCBI Taxonomy" id="298386"/>
    <lineage>
        <taxon>Bacteria</taxon>
        <taxon>Pseudomonadati</taxon>
        <taxon>Pseudomonadota</taxon>
        <taxon>Gammaproteobacteria</taxon>
        <taxon>Vibrionales</taxon>
        <taxon>Vibrionaceae</taxon>
        <taxon>Photobacterium</taxon>
    </lineage>
</organism>
<feature type="chain" id="PRO_0000104776" description="Large ribosomal subunit protein uL15">
    <location>
        <begin position="1"/>
        <end position="144"/>
    </location>
</feature>
<feature type="region of interest" description="Disordered" evidence="2">
    <location>
        <begin position="1"/>
        <end position="57"/>
    </location>
</feature>
<feature type="compositionally biased region" description="Gly residues" evidence="2">
    <location>
        <begin position="21"/>
        <end position="31"/>
    </location>
</feature>
<evidence type="ECO:0000255" key="1">
    <source>
        <dbReference type="HAMAP-Rule" id="MF_01341"/>
    </source>
</evidence>
<evidence type="ECO:0000256" key="2">
    <source>
        <dbReference type="SAM" id="MobiDB-lite"/>
    </source>
</evidence>
<evidence type="ECO:0000305" key="3"/>